<protein>
    <recommendedName>
        <fullName>Histone acetyltransferase type B catalytic subunit</fullName>
        <shortName>HAT B</shortName>
        <ecNumber evidence="2">2.3.1.48</ecNumber>
    </recommendedName>
</protein>
<name>HATB_ARATH</name>
<organism>
    <name type="scientific">Arabidopsis thaliana</name>
    <name type="common">Mouse-ear cress</name>
    <dbReference type="NCBI Taxonomy" id="3702"/>
    <lineage>
        <taxon>Eukaryota</taxon>
        <taxon>Viridiplantae</taxon>
        <taxon>Streptophyta</taxon>
        <taxon>Embryophyta</taxon>
        <taxon>Tracheophyta</taxon>
        <taxon>Spermatophyta</taxon>
        <taxon>Magnoliopsida</taxon>
        <taxon>eudicotyledons</taxon>
        <taxon>Gunneridae</taxon>
        <taxon>Pentapetalae</taxon>
        <taxon>rosids</taxon>
        <taxon>malvids</taxon>
        <taxon>Brassicales</taxon>
        <taxon>Brassicaceae</taxon>
        <taxon>Camelineae</taxon>
        <taxon>Arabidopsis</taxon>
    </lineage>
</organism>
<reference key="1">
    <citation type="journal article" date="1998" name="DNA Res.">
        <title>Structural analysis of Arabidopsis thaliana chromosome 5. VI. Sequence features of the regions of 1,367,185 bp covered by 19 physically assigned P1 and TAC clones.</title>
        <authorList>
            <person name="Kotani H."/>
            <person name="Nakamura Y."/>
            <person name="Sato S."/>
            <person name="Asamizu E."/>
            <person name="Kaneko T."/>
            <person name="Miyajima N."/>
            <person name="Tabata S."/>
        </authorList>
    </citation>
    <scope>NUCLEOTIDE SEQUENCE [LARGE SCALE GENOMIC DNA]</scope>
    <source>
        <strain>cv. Columbia</strain>
    </source>
</reference>
<reference key="2">
    <citation type="journal article" date="2017" name="Plant J.">
        <title>Araport11: a complete reannotation of the Arabidopsis thaliana reference genome.</title>
        <authorList>
            <person name="Cheng C.Y."/>
            <person name="Krishnakumar V."/>
            <person name="Chan A.P."/>
            <person name="Thibaud-Nissen F."/>
            <person name="Schobel S."/>
            <person name="Town C.D."/>
        </authorList>
    </citation>
    <scope>GENOME REANNOTATION</scope>
    <source>
        <strain>cv. Columbia</strain>
    </source>
</reference>
<reference key="3">
    <citation type="journal article" date="2002" name="Nucleic Acids Res.">
        <title>Analysis of histone acetyltransferase and histone deacetylase families of Arabidopsis thaliana suggests functional diversification of chromatin modification among multicellular eukaryotes.</title>
        <authorList>
            <person name="Pandey R."/>
            <person name="Mueller A."/>
            <person name="Napoli C.A."/>
            <person name="Selinger D.A."/>
            <person name="Pikaard C.S."/>
            <person name="Richards E.J."/>
            <person name="Bender J."/>
            <person name="Mount D.W."/>
            <person name="Jorgensen R.A."/>
        </authorList>
    </citation>
    <scope>NUCLEOTIDE SEQUENCE [MRNA] OF 22-251</scope>
    <scope>NOMENCLATURE</scope>
</reference>
<reference key="4">
    <citation type="journal article" date="2006" name="Genes Dev.">
        <title>Erasure of histone acetylation by Arabidopsis HDA6 mediates large-scale gene silencing in nucleolar dominance.</title>
        <authorList>
            <person name="Earley K."/>
            <person name="Lawrence R.J."/>
            <person name="Pontes O."/>
            <person name="Reuther R."/>
            <person name="Enciso A.J."/>
            <person name="Silva M."/>
            <person name="Neves N."/>
            <person name="Gross M."/>
            <person name="Viegas W."/>
            <person name="Pikaard C.S."/>
        </authorList>
    </citation>
    <scope>FUNCTION</scope>
</reference>
<feature type="chain" id="PRO_0000232125" description="Histone acetyltransferase type B catalytic subunit">
    <location>
        <begin position="1"/>
        <end position="467"/>
    </location>
</feature>
<feature type="region of interest" description="Disordered" evidence="3">
    <location>
        <begin position="1"/>
        <end position="24"/>
    </location>
</feature>
<feature type="active site" description="Proton donor/acceptor" evidence="2">
    <location>
        <position position="283"/>
    </location>
</feature>
<feature type="binding site" evidence="2">
    <location>
        <begin position="249"/>
        <end position="251"/>
    </location>
    <ligand>
        <name>acetyl-CoA</name>
        <dbReference type="ChEBI" id="CHEBI:57288"/>
    </ligand>
</feature>
<feature type="binding site" evidence="2">
    <location>
        <begin position="256"/>
        <end position="262"/>
    </location>
    <ligand>
        <name>acetyl-CoA</name>
        <dbReference type="ChEBI" id="CHEBI:57288"/>
    </ligand>
</feature>
<feature type="site" description="Interaction with histone H4 N-terminus" evidence="2">
    <location>
        <position position="207"/>
    </location>
</feature>
<accession>Q9FJT8</accession>
<accession>Q8LKJ6</accession>
<keyword id="KW-0012">Acyltransferase</keyword>
<keyword id="KW-0963">Cytoplasm</keyword>
<keyword id="KW-0539">Nucleus</keyword>
<keyword id="KW-1185">Reference proteome</keyword>
<keyword id="KW-0808">Transferase</keyword>
<sequence length="467" mass="52738">MVQKQQASAGPGTEPKKRRRVGFSPADTGVEANECIKIYLVSSKEEVDSSDISSVKPVDLNDFFDGDGKIYGYQGLKINVWINSISLHSYADITYQSTINGDKGITDLKSALQNIFAETIVDTKDEFLQTFSTQRDFIRNMVSNGEVMHAGATDGSSKNAEVVPSDPQVIRMEIGSPNAGLLYSRLVPLVLLFVDGSNPIDVTDPDWHLYLLIQKKEEKEDPLYRIVGFTAIYKFYRYPDRLRMRLSQILVLPSFQGKGLGSYLMEVVNNVAITENVYDLTVEEPSEKFQHIRTCIDINRLRSFDPIKPDIDSAVQTLTKGKLSKKAQIPRFTPPLNAIEKVRESLKINKKQFLKCWEILIYLALDPIDKYMEDYTSVITNHVRTDILGKDIETPKKQVVDVPSSFEPEASFVVFKSVNGEEANTNVQVDENKPDQEQQLKQLVEERIREIKLVAEKVSKSGQTLKV</sequence>
<comment type="function">
    <text evidence="2 4">Acetylates soluble but not nucleosomal H4 (By similarity). Acetylates 'Lys-12' of histone H4.</text>
</comment>
<comment type="catalytic activity">
    <reaction evidence="2">
        <text>L-lysyl-[protein] + acetyl-CoA = N(6)-acetyl-L-lysyl-[protein] + CoA + H(+)</text>
        <dbReference type="Rhea" id="RHEA:45948"/>
        <dbReference type="Rhea" id="RHEA-COMP:9752"/>
        <dbReference type="Rhea" id="RHEA-COMP:10731"/>
        <dbReference type="ChEBI" id="CHEBI:15378"/>
        <dbReference type="ChEBI" id="CHEBI:29969"/>
        <dbReference type="ChEBI" id="CHEBI:57287"/>
        <dbReference type="ChEBI" id="CHEBI:57288"/>
        <dbReference type="ChEBI" id="CHEBI:61930"/>
        <dbReference type="EC" id="2.3.1.48"/>
    </reaction>
</comment>
<comment type="subcellular location">
    <subcellularLocation>
        <location evidence="1">Nucleus</location>
    </subcellularLocation>
    <subcellularLocation>
        <location evidence="1">Cytoplasm</location>
    </subcellularLocation>
</comment>
<comment type="similarity">
    <text evidence="5">Belongs to the HAT1 family.</text>
</comment>
<evidence type="ECO:0000250" key="1"/>
<evidence type="ECO:0000250" key="2">
    <source>
        <dbReference type="UniProtKB" id="O14929"/>
    </source>
</evidence>
<evidence type="ECO:0000256" key="3">
    <source>
        <dbReference type="SAM" id="MobiDB-lite"/>
    </source>
</evidence>
<evidence type="ECO:0000269" key="4">
    <source>
    </source>
</evidence>
<evidence type="ECO:0000305" key="5"/>
<dbReference type="EC" id="2.3.1.48" evidence="2"/>
<dbReference type="EMBL" id="AB013392">
    <property type="protein sequence ID" value="BAB09892.1"/>
    <property type="molecule type" value="Genomic_DNA"/>
</dbReference>
<dbReference type="EMBL" id="CP002688">
    <property type="protein sequence ID" value="AED96802.1"/>
    <property type="molecule type" value="Genomic_DNA"/>
</dbReference>
<dbReference type="EMBL" id="AF512724">
    <property type="protein sequence ID" value="AAM70417.1"/>
    <property type="molecule type" value="mRNA"/>
</dbReference>
<dbReference type="RefSeq" id="NP_200485.1">
    <property type="nucleotide sequence ID" value="NM_125057.4"/>
</dbReference>
<dbReference type="SMR" id="Q9FJT8"/>
<dbReference type="BioGRID" id="21019">
    <property type="interactions" value="3"/>
</dbReference>
<dbReference type="FunCoup" id="Q9FJT8">
    <property type="interactions" value="4166"/>
</dbReference>
<dbReference type="STRING" id="3702.Q9FJT8"/>
<dbReference type="iPTMnet" id="Q9FJT8"/>
<dbReference type="MetOSite" id="Q9FJT8"/>
<dbReference type="PaxDb" id="3702-AT5G56740.1"/>
<dbReference type="ProteomicsDB" id="230297"/>
<dbReference type="EnsemblPlants" id="AT5G56740.1">
    <property type="protein sequence ID" value="AT5G56740.1"/>
    <property type="gene ID" value="AT5G56740"/>
</dbReference>
<dbReference type="GeneID" id="835775"/>
<dbReference type="Gramene" id="AT5G56740.1">
    <property type="protein sequence ID" value="AT5G56740.1"/>
    <property type="gene ID" value="AT5G56740"/>
</dbReference>
<dbReference type="KEGG" id="ath:AT5G56740"/>
<dbReference type="Araport" id="AT5G56740"/>
<dbReference type="TAIR" id="AT5G56740">
    <property type="gene designation" value="HAG2"/>
</dbReference>
<dbReference type="eggNOG" id="KOG2696">
    <property type="taxonomic scope" value="Eukaryota"/>
</dbReference>
<dbReference type="HOGENOM" id="CLU_046617_0_0_1"/>
<dbReference type="InParanoid" id="Q9FJT8"/>
<dbReference type="OMA" id="WTCDAND"/>
<dbReference type="OrthoDB" id="10253098at2759"/>
<dbReference type="PhylomeDB" id="Q9FJT8"/>
<dbReference type="PRO" id="PR:Q9FJT8"/>
<dbReference type="Proteomes" id="UP000006548">
    <property type="component" value="Chromosome 5"/>
</dbReference>
<dbReference type="ExpressionAtlas" id="Q9FJT8">
    <property type="expression patterns" value="baseline and differential"/>
</dbReference>
<dbReference type="GO" id="GO:0000781">
    <property type="term" value="C:chromosome, telomeric region"/>
    <property type="evidence" value="ECO:0007669"/>
    <property type="project" value="GOC"/>
</dbReference>
<dbReference type="GO" id="GO:0005737">
    <property type="term" value="C:cytoplasm"/>
    <property type="evidence" value="ECO:0007669"/>
    <property type="project" value="UniProtKB-SubCell"/>
</dbReference>
<dbReference type="GO" id="GO:0005634">
    <property type="term" value="C:nucleus"/>
    <property type="evidence" value="ECO:0000314"/>
    <property type="project" value="TAIR"/>
</dbReference>
<dbReference type="GO" id="GO:0010485">
    <property type="term" value="F:histone H4 acetyltransferase activity"/>
    <property type="evidence" value="ECO:0000314"/>
    <property type="project" value="TAIR"/>
</dbReference>
<dbReference type="GO" id="GO:0031509">
    <property type="term" value="P:subtelomeric heterochromatin formation"/>
    <property type="evidence" value="ECO:0007669"/>
    <property type="project" value="InterPro"/>
</dbReference>
<dbReference type="CDD" id="cd04301">
    <property type="entry name" value="NAT_SF"/>
    <property type="match status" value="1"/>
</dbReference>
<dbReference type="FunFam" id="3.40.630.30:FF:000077">
    <property type="entry name" value="Histone acetyltransferase type B catalytic subunit"/>
    <property type="match status" value="1"/>
</dbReference>
<dbReference type="FunFam" id="3.90.360.10:FF:000002">
    <property type="entry name" value="Histone acetyltransferase type B catalytic subunit"/>
    <property type="match status" value="1"/>
</dbReference>
<dbReference type="Gene3D" id="3.40.630.30">
    <property type="match status" value="1"/>
</dbReference>
<dbReference type="Gene3D" id="3.90.360.10">
    <property type="entry name" value="Histone acetyl transferase 1 (HAT1), N-terminal domain"/>
    <property type="match status" value="1"/>
</dbReference>
<dbReference type="InterPro" id="IPR016181">
    <property type="entry name" value="Acyl_CoA_acyltransferase"/>
</dbReference>
<dbReference type="InterPro" id="IPR000182">
    <property type="entry name" value="GNAT_dom"/>
</dbReference>
<dbReference type="InterPro" id="IPR019467">
    <property type="entry name" value="Hat1_N"/>
</dbReference>
<dbReference type="InterPro" id="IPR037113">
    <property type="entry name" value="Hat1_N_sf"/>
</dbReference>
<dbReference type="InterPro" id="IPR017380">
    <property type="entry name" value="Hist_AcTrfase_B-typ_cat-su"/>
</dbReference>
<dbReference type="PANTHER" id="PTHR12046">
    <property type="entry name" value="HISTONE ACETYLTRANSFERASE TYPE B CATALYTIC SUBUNIT"/>
    <property type="match status" value="1"/>
</dbReference>
<dbReference type="Pfam" id="PF00583">
    <property type="entry name" value="Acetyltransf_1"/>
    <property type="match status" value="1"/>
</dbReference>
<dbReference type="Pfam" id="PF10394">
    <property type="entry name" value="Hat1_N"/>
    <property type="match status" value="1"/>
</dbReference>
<dbReference type="PIRSF" id="PIRSF038084">
    <property type="entry name" value="HAT-B_cat"/>
    <property type="match status" value="1"/>
</dbReference>
<dbReference type="SUPFAM" id="SSF55729">
    <property type="entry name" value="Acyl-CoA N-acyltransferases (Nat)"/>
    <property type="match status" value="1"/>
</dbReference>
<proteinExistence type="evidence at transcript level"/>
<gene>
    <name type="primary">HAG2</name>
    <name type="synonym">HAT1</name>
    <name type="ordered locus">At5g56740</name>
    <name type="ORF">MIK19.19</name>
</gene>